<comment type="function">
    <text evidence="1">Binds to the 23S rRNA.</text>
</comment>
<comment type="subunit">
    <text evidence="1">Part of the 50S ribosomal subunit.</text>
</comment>
<comment type="similarity">
    <text evidence="1">Belongs to the universal ribosomal protein uL15 family.</text>
</comment>
<sequence>MRLHELYPFDEERKQRKRVGRGSGSGWGCTSGKGNKGQNARSGGGVRPGFEGGQMPLQRRLPKRGFKNYLFKARYEVINLGQLVGAFEGKTEITLDDIYARGLARAGAAVKVLGNGECNVAVKVEAHKFSASAVEKIQKAGGEAKALEG</sequence>
<accession>Q30Z61</accession>
<name>RL15_OLEA2</name>
<gene>
    <name evidence="1" type="primary">rplO</name>
    <name type="ordered locus">Dde_2238</name>
</gene>
<feature type="chain" id="PRO_0000251507" description="Large ribosomal subunit protein uL15">
    <location>
        <begin position="1"/>
        <end position="149"/>
    </location>
</feature>
<feature type="region of interest" description="Disordered" evidence="2">
    <location>
        <begin position="14"/>
        <end position="57"/>
    </location>
</feature>
<feature type="compositionally biased region" description="Gly residues" evidence="2">
    <location>
        <begin position="21"/>
        <end position="35"/>
    </location>
</feature>
<feature type="compositionally biased region" description="Gly residues" evidence="2">
    <location>
        <begin position="42"/>
        <end position="52"/>
    </location>
</feature>
<organism>
    <name type="scientific">Oleidesulfovibrio alaskensis (strain ATCC BAA-1058 / DSM 17464 / G20)</name>
    <name type="common">Desulfovibrio alaskensis</name>
    <dbReference type="NCBI Taxonomy" id="207559"/>
    <lineage>
        <taxon>Bacteria</taxon>
        <taxon>Pseudomonadati</taxon>
        <taxon>Thermodesulfobacteriota</taxon>
        <taxon>Desulfovibrionia</taxon>
        <taxon>Desulfovibrionales</taxon>
        <taxon>Desulfovibrionaceae</taxon>
        <taxon>Oleidesulfovibrio</taxon>
    </lineage>
</organism>
<evidence type="ECO:0000255" key="1">
    <source>
        <dbReference type="HAMAP-Rule" id="MF_01341"/>
    </source>
</evidence>
<evidence type="ECO:0000256" key="2">
    <source>
        <dbReference type="SAM" id="MobiDB-lite"/>
    </source>
</evidence>
<evidence type="ECO:0000305" key="3"/>
<reference key="1">
    <citation type="journal article" date="2011" name="J. Bacteriol.">
        <title>Complete genome sequence and updated annotation of Desulfovibrio alaskensis G20.</title>
        <authorList>
            <person name="Hauser L.J."/>
            <person name="Land M.L."/>
            <person name="Brown S.D."/>
            <person name="Larimer F."/>
            <person name="Keller K.L."/>
            <person name="Rapp-Giles B.J."/>
            <person name="Price M.N."/>
            <person name="Lin M."/>
            <person name="Bruce D.C."/>
            <person name="Detter J.C."/>
            <person name="Tapia R."/>
            <person name="Han C.S."/>
            <person name="Goodwin L.A."/>
            <person name="Cheng J.F."/>
            <person name="Pitluck S."/>
            <person name="Copeland A."/>
            <person name="Lucas S."/>
            <person name="Nolan M."/>
            <person name="Lapidus A.L."/>
            <person name="Palumbo A.V."/>
            <person name="Wall J.D."/>
        </authorList>
    </citation>
    <scope>NUCLEOTIDE SEQUENCE [LARGE SCALE GENOMIC DNA]</scope>
    <source>
        <strain>ATCC BAA-1058 / DSM 17464 / G20</strain>
    </source>
</reference>
<keyword id="KW-1185">Reference proteome</keyword>
<keyword id="KW-0687">Ribonucleoprotein</keyword>
<keyword id="KW-0689">Ribosomal protein</keyword>
<keyword id="KW-0694">RNA-binding</keyword>
<keyword id="KW-0699">rRNA-binding</keyword>
<proteinExistence type="inferred from homology"/>
<protein>
    <recommendedName>
        <fullName evidence="1">Large ribosomal subunit protein uL15</fullName>
    </recommendedName>
    <alternativeName>
        <fullName evidence="3">50S ribosomal protein L15</fullName>
    </alternativeName>
</protein>
<dbReference type="EMBL" id="CP000112">
    <property type="protein sequence ID" value="ABB39035.1"/>
    <property type="molecule type" value="Genomic_DNA"/>
</dbReference>
<dbReference type="RefSeq" id="WP_011368126.1">
    <property type="nucleotide sequence ID" value="NC_007519.1"/>
</dbReference>
<dbReference type="SMR" id="Q30Z61"/>
<dbReference type="STRING" id="207559.Dde_2238"/>
<dbReference type="KEGG" id="dde:Dde_2238"/>
<dbReference type="eggNOG" id="COG0200">
    <property type="taxonomic scope" value="Bacteria"/>
</dbReference>
<dbReference type="HOGENOM" id="CLU_055188_4_2_7"/>
<dbReference type="Proteomes" id="UP000002710">
    <property type="component" value="Chromosome"/>
</dbReference>
<dbReference type="GO" id="GO:0022625">
    <property type="term" value="C:cytosolic large ribosomal subunit"/>
    <property type="evidence" value="ECO:0007669"/>
    <property type="project" value="TreeGrafter"/>
</dbReference>
<dbReference type="GO" id="GO:0019843">
    <property type="term" value="F:rRNA binding"/>
    <property type="evidence" value="ECO:0007669"/>
    <property type="project" value="UniProtKB-UniRule"/>
</dbReference>
<dbReference type="GO" id="GO:0003735">
    <property type="term" value="F:structural constituent of ribosome"/>
    <property type="evidence" value="ECO:0007669"/>
    <property type="project" value="InterPro"/>
</dbReference>
<dbReference type="GO" id="GO:0006412">
    <property type="term" value="P:translation"/>
    <property type="evidence" value="ECO:0007669"/>
    <property type="project" value="UniProtKB-UniRule"/>
</dbReference>
<dbReference type="Gene3D" id="3.100.10.10">
    <property type="match status" value="1"/>
</dbReference>
<dbReference type="HAMAP" id="MF_01341">
    <property type="entry name" value="Ribosomal_uL15"/>
    <property type="match status" value="1"/>
</dbReference>
<dbReference type="InterPro" id="IPR030878">
    <property type="entry name" value="Ribosomal_uL15"/>
</dbReference>
<dbReference type="InterPro" id="IPR021131">
    <property type="entry name" value="Ribosomal_uL15/eL18"/>
</dbReference>
<dbReference type="InterPro" id="IPR036227">
    <property type="entry name" value="Ribosomal_uL15/eL18_sf"/>
</dbReference>
<dbReference type="InterPro" id="IPR005749">
    <property type="entry name" value="Ribosomal_uL15_bac-type"/>
</dbReference>
<dbReference type="NCBIfam" id="TIGR01071">
    <property type="entry name" value="rplO_bact"/>
    <property type="match status" value="1"/>
</dbReference>
<dbReference type="PANTHER" id="PTHR12934">
    <property type="entry name" value="50S RIBOSOMAL PROTEIN L15"/>
    <property type="match status" value="1"/>
</dbReference>
<dbReference type="PANTHER" id="PTHR12934:SF11">
    <property type="entry name" value="LARGE RIBOSOMAL SUBUNIT PROTEIN UL15M"/>
    <property type="match status" value="1"/>
</dbReference>
<dbReference type="Pfam" id="PF00828">
    <property type="entry name" value="Ribosomal_L27A"/>
    <property type="match status" value="1"/>
</dbReference>
<dbReference type="SUPFAM" id="SSF52080">
    <property type="entry name" value="Ribosomal proteins L15p and L18e"/>
    <property type="match status" value="1"/>
</dbReference>